<reference key="1">
    <citation type="submission" date="2007-11" db="EMBL/GenBank/DDBJ databases">
        <authorList>
            <consortium name="The Salmonella enterica serovar Paratyphi B Genome Sequencing Project"/>
            <person name="McClelland M."/>
            <person name="Sanderson E.K."/>
            <person name="Porwollik S."/>
            <person name="Spieth J."/>
            <person name="Clifton W.S."/>
            <person name="Fulton R."/>
            <person name="Cordes M."/>
            <person name="Wollam A."/>
            <person name="Shah N."/>
            <person name="Pepin K."/>
            <person name="Bhonagiri V."/>
            <person name="Nash W."/>
            <person name="Johnson M."/>
            <person name="Thiruvilangam P."/>
            <person name="Wilson R."/>
        </authorList>
    </citation>
    <scope>NUCLEOTIDE SEQUENCE [LARGE SCALE GENOMIC DNA]</scope>
    <source>
        <strain>ATCC BAA-1250 / SPB7</strain>
    </source>
</reference>
<feature type="chain" id="PRO_1000088198" description="Fe/S biogenesis protein NfuA">
    <location>
        <begin position="1"/>
        <end position="191"/>
    </location>
</feature>
<feature type="binding site" evidence="1">
    <location>
        <position position="149"/>
    </location>
    <ligand>
        <name>[4Fe-4S] cluster</name>
        <dbReference type="ChEBI" id="CHEBI:49883"/>
    </ligand>
</feature>
<feature type="binding site" evidence="1">
    <location>
        <position position="152"/>
    </location>
    <ligand>
        <name>[4Fe-4S] cluster</name>
        <dbReference type="ChEBI" id="CHEBI:49883"/>
    </ligand>
</feature>
<accession>A9MTT1</accession>
<sequence length="191" mass="20938">MIRISDAAQAHFAKLLANQEEGTQIRVFVINPGTPNAECGVSYCPPDAVEATDTALKFDLLTAYVDELSAPYLEDAEIDFVTDQLGSQLTLKAPNAKMRKVADDAPLMERVEYALQSQINPQLAGHGGRVSLMEITDEGYAILQFGGGCNGCSMVDVTLKEGIEKQLLNEFPELKGVRDLTEHQRGEHSYY</sequence>
<comment type="function">
    <text evidence="1">Involved in iron-sulfur cluster biogenesis. Binds a 4Fe-4S cluster, can transfer this cluster to apoproteins, and thereby intervenes in the maturation of Fe/S proteins. Could also act as a scaffold/chaperone for damaged Fe/S proteins.</text>
</comment>
<comment type="cofactor">
    <cofactor evidence="1">
        <name>[4Fe-4S] cluster</name>
        <dbReference type="ChEBI" id="CHEBI:49883"/>
    </cofactor>
    <text evidence="1">Binds 1 [4Fe-4S] cluster per subunit. The cluster is presumably bound at the interface of two monomers.</text>
</comment>
<comment type="subunit">
    <text evidence="1">Homodimer.</text>
</comment>
<comment type="similarity">
    <text evidence="1">Belongs to the NfuA family.</text>
</comment>
<name>NFUA_SALPB</name>
<gene>
    <name evidence="1" type="primary">nfuA</name>
    <name type="ordered locus">SPAB_04370</name>
</gene>
<organism>
    <name type="scientific">Salmonella paratyphi B (strain ATCC BAA-1250 / SPB7)</name>
    <dbReference type="NCBI Taxonomy" id="1016998"/>
    <lineage>
        <taxon>Bacteria</taxon>
        <taxon>Pseudomonadati</taxon>
        <taxon>Pseudomonadota</taxon>
        <taxon>Gammaproteobacteria</taxon>
        <taxon>Enterobacterales</taxon>
        <taxon>Enterobacteriaceae</taxon>
        <taxon>Salmonella</taxon>
    </lineage>
</organism>
<dbReference type="EMBL" id="CP000886">
    <property type="protein sequence ID" value="ABX69686.1"/>
    <property type="molecule type" value="Genomic_DNA"/>
</dbReference>
<dbReference type="RefSeq" id="WP_000619387.1">
    <property type="nucleotide sequence ID" value="NC_010102.1"/>
</dbReference>
<dbReference type="SMR" id="A9MTT1"/>
<dbReference type="GeneID" id="66757844"/>
<dbReference type="KEGG" id="spq:SPAB_04370"/>
<dbReference type="PATRIC" id="fig|1016998.12.peg.4113"/>
<dbReference type="HOGENOM" id="CLU_094569_0_0_6"/>
<dbReference type="BioCyc" id="SENT1016998:SPAB_RS17785-MONOMER"/>
<dbReference type="Proteomes" id="UP000008556">
    <property type="component" value="Chromosome"/>
</dbReference>
<dbReference type="GO" id="GO:0051539">
    <property type="term" value="F:4 iron, 4 sulfur cluster binding"/>
    <property type="evidence" value="ECO:0007669"/>
    <property type="project" value="UniProtKB-UniRule"/>
</dbReference>
<dbReference type="GO" id="GO:0005506">
    <property type="term" value="F:iron ion binding"/>
    <property type="evidence" value="ECO:0007669"/>
    <property type="project" value="InterPro"/>
</dbReference>
<dbReference type="GO" id="GO:0016226">
    <property type="term" value="P:iron-sulfur cluster assembly"/>
    <property type="evidence" value="ECO:0007669"/>
    <property type="project" value="UniProtKB-UniRule"/>
</dbReference>
<dbReference type="GO" id="GO:0051604">
    <property type="term" value="P:protein maturation"/>
    <property type="evidence" value="ECO:0007669"/>
    <property type="project" value="UniProtKB-UniRule"/>
</dbReference>
<dbReference type="FunFam" id="2.60.300.12:FF:000004">
    <property type="entry name" value="Fe/S biogenesis protein NfuA"/>
    <property type="match status" value="1"/>
</dbReference>
<dbReference type="FunFam" id="3.30.300.130:FF:000002">
    <property type="entry name" value="Fe/S biogenesis protein NfuA"/>
    <property type="match status" value="1"/>
</dbReference>
<dbReference type="Gene3D" id="3.30.300.130">
    <property type="entry name" value="Fe-S cluster assembly (FSCA)"/>
    <property type="match status" value="1"/>
</dbReference>
<dbReference type="Gene3D" id="2.60.300.12">
    <property type="entry name" value="HesB-like domain"/>
    <property type="match status" value="1"/>
</dbReference>
<dbReference type="HAMAP" id="MF_01637">
    <property type="entry name" value="Fe_S_biogen_NfuA"/>
    <property type="match status" value="1"/>
</dbReference>
<dbReference type="InterPro" id="IPR017726">
    <property type="entry name" value="Fe/S_biogenesis_protein_NfuA"/>
</dbReference>
<dbReference type="InterPro" id="IPR000361">
    <property type="entry name" value="FeS_biogenesis"/>
</dbReference>
<dbReference type="InterPro" id="IPR034904">
    <property type="entry name" value="FSCA_dom_sf"/>
</dbReference>
<dbReference type="InterPro" id="IPR035903">
    <property type="entry name" value="HesB-like_dom_sf"/>
</dbReference>
<dbReference type="InterPro" id="IPR001075">
    <property type="entry name" value="NIF_FeS_clus_asmbl_NifU_C"/>
</dbReference>
<dbReference type="NCBIfam" id="NF008392">
    <property type="entry name" value="PRK11190.1"/>
    <property type="match status" value="1"/>
</dbReference>
<dbReference type="NCBIfam" id="TIGR03341">
    <property type="entry name" value="YhgI_GntY"/>
    <property type="match status" value="1"/>
</dbReference>
<dbReference type="PANTHER" id="PTHR11178:SF51">
    <property type="entry name" value="FE_S BIOGENESIS PROTEIN NFUA"/>
    <property type="match status" value="1"/>
</dbReference>
<dbReference type="PANTHER" id="PTHR11178">
    <property type="entry name" value="IRON-SULFUR CLUSTER SCAFFOLD PROTEIN NFU-RELATED"/>
    <property type="match status" value="1"/>
</dbReference>
<dbReference type="Pfam" id="PF01521">
    <property type="entry name" value="Fe-S_biosyn"/>
    <property type="match status" value="1"/>
</dbReference>
<dbReference type="Pfam" id="PF01106">
    <property type="entry name" value="NifU"/>
    <property type="match status" value="1"/>
</dbReference>
<dbReference type="SUPFAM" id="SSF117916">
    <property type="entry name" value="Fe-S cluster assembly (FSCA) domain-like"/>
    <property type="match status" value="1"/>
</dbReference>
<dbReference type="SUPFAM" id="SSF89360">
    <property type="entry name" value="HesB-like domain"/>
    <property type="match status" value="1"/>
</dbReference>
<proteinExistence type="inferred from homology"/>
<evidence type="ECO:0000255" key="1">
    <source>
        <dbReference type="HAMAP-Rule" id="MF_01637"/>
    </source>
</evidence>
<keyword id="KW-0004">4Fe-4S</keyword>
<keyword id="KW-0408">Iron</keyword>
<keyword id="KW-0411">Iron-sulfur</keyword>
<keyword id="KW-0479">Metal-binding</keyword>
<protein>
    <recommendedName>
        <fullName evidence="1">Fe/S biogenesis protein NfuA</fullName>
    </recommendedName>
</protein>